<dbReference type="EC" id="1.-.-.-" evidence="7"/>
<dbReference type="EMBL" id="KC963408">
    <property type="protein sequence ID" value="AGZ20192.1"/>
    <property type="molecule type" value="Genomic_DNA"/>
</dbReference>
<dbReference type="SMR" id="A0A0E3D8P8"/>
<dbReference type="GlyCosmos" id="A0A0E3D8P8">
    <property type="glycosylation" value="3 sites, No reported glycans"/>
</dbReference>
<dbReference type="GO" id="GO:0016020">
    <property type="term" value="C:membrane"/>
    <property type="evidence" value="ECO:0007669"/>
    <property type="project" value="UniProtKB-SubCell"/>
</dbReference>
<dbReference type="GO" id="GO:0020037">
    <property type="term" value="F:heme binding"/>
    <property type="evidence" value="ECO:0007669"/>
    <property type="project" value="InterPro"/>
</dbReference>
<dbReference type="GO" id="GO:0005506">
    <property type="term" value="F:iron ion binding"/>
    <property type="evidence" value="ECO:0007669"/>
    <property type="project" value="InterPro"/>
</dbReference>
<dbReference type="GO" id="GO:0004497">
    <property type="term" value="F:monooxygenase activity"/>
    <property type="evidence" value="ECO:0007669"/>
    <property type="project" value="UniProtKB-KW"/>
</dbReference>
<dbReference type="GO" id="GO:0016705">
    <property type="term" value="F:oxidoreductase activity, acting on paired donors, with incorporation or reduction of molecular oxygen"/>
    <property type="evidence" value="ECO:0007669"/>
    <property type="project" value="InterPro"/>
</dbReference>
<dbReference type="GO" id="GO:0043386">
    <property type="term" value="P:mycotoxin biosynthetic process"/>
    <property type="evidence" value="ECO:0007669"/>
    <property type="project" value="UniProtKB-ARBA"/>
</dbReference>
<dbReference type="CDD" id="cd11041">
    <property type="entry name" value="CYP503A1-like"/>
    <property type="match status" value="1"/>
</dbReference>
<dbReference type="Gene3D" id="1.10.630.10">
    <property type="entry name" value="Cytochrome P450"/>
    <property type="match status" value="1"/>
</dbReference>
<dbReference type="InterPro" id="IPR001128">
    <property type="entry name" value="Cyt_P450"/>
</dbReference>
<dbReference type="InterPro" id="IPR017972">
    <property type="entry name" value="Cyt_P450_CS"/>
</dbReference>
<dbReference type="InterPro" id="IPR002401">
    <property type="entry name" value="Cyt_P450_E_grp-I"/>
</dbReference>
<dbReference type="InterPro" id="IPR036396">
    <property type="entry name" value="Cyt_P450_sf"/>
</dbReference>
<dbReference type="PANTHER" id="PTHR46206">
    <property type="entry name" value="CYTOCHROME P450"/>
    <property type="match status" value="1"/>
</dbReference>
<dbReference type="PANTHER" id="PTHR46206:SF5">
    <property type="entry name" value="P450, PUTATIVE (EUROFUNG)-RELATED"/>
    <property type="match status" value="1"/>
</dbReference>
<dbReference type="Pfam" id="PF00067">
    <property type="entry name" value="p450"/>
    <property type="match status" value="1"/>
</dbReference>
<dbReference type="PRINTS" id="PR00463">
    <property type="entry name" value="EP450I"/>
</dbReference>
<dbReference type="SUPFAM" id="SSF48264">
    <property type="entry name" value="Cytochrome P450"/>
    <property type="match status" value="1"/>
</dbReference>
<dbReference type="PROSITE" id="PS00086">
    <property type="entry name" value="CYTOCHROME_P450"/>
    <property type="match status" value="1"/>
</dbReference>
<organism>
    <name type="scientific">Penicillium crustosum</name>
    <name type="common">Blue mold fungus</name>
    <dbReference type="NCBI Taxonomy" id="36656"/>
    <lineage>
        <taxon>Eukaryota</taxon>
        <taxon>Fungi</taxon>
        <taxon>Dikarya</taxon>
        <taxon>Ascomycota</taxon>
        <taxon>Pezizomycotina</taxon>
        <taxon>Eurotiomycetes</taxon>
        <taxon>Eurotiomycetidae</taxon>
        <taxon>Eurotiales</taxon>
        <taxon>Aspergillaceae</taxon>
        <taxon>Penicillium</taxon>
    </lineage>
</organism>
<evidence type="ECO:0000250" key="1">
    <source>
        <dbReference type="UniProtKB" id="P04798"/>
    </source>
</evidence>
<evidence type="ECO:0000255" key="2"/>
<evidence type="ECO:0000255" key="3">
    <source>
        <dbReference type="PROSITE-ProRule" id="PRU00498"/>
    </source>
</evidence>
<evidence type="ECO:0000269" key="4">
    <source>
    </source>
</evidence>
<evidence type="ECO:0000303" key="5">
    <source>
    </source>
</evidence>
<evidence type="ECO:0000305" key="6"/>
<evidence type="ECO:0000305" key="7">
    <source>
    </source>
</evidence>
<keyword id="KW-0325">Glycoprotein</keyword>
<keyword id="KW-0349">Heme</keyword>
<keyword id="KW-0408">Iron</keyword>
<keyword id="KW-0472">Membrane</keyword>
<keyword id="KW-0479">Metal-binding</keyword>
<keyword id="KW-0503">Monooxygenase</keyword>
<keyword id="KW-0560">Oxidoreductase</keyword>
<keyword id="KW-0812">Transmembrane</keyword>
<keyword id="KW-1133">Transmembrane helix</keyword>
<gene>
    <name evidence="5" type="primary">penQ</name>
</gene>
<comment type="function">
    <text evidence="4 7">Cytochrome P450 monooxygenase; part of the gene cluster that mediates the biosynthesis of the indole diterpenes penitrems (PubMed:26213965). The geranylgeranyl diphosphate (GGPP) synthase penG catalyzes the first step in penitrem biosynthesis via conversion of farnesyl pyrophosphate and isopentyl pyrophosphate into geranylgeranyl pyrophosphate (GGPP) (Probable). Condensation of indole-3-glycerol phosphate with GGPP by the prenyl transferase penC then forms 3-geranylgeranylindole (3-GGI) (Probable). Epoxidation by the FAD-dependent monooxygenase penM leads to a epoxidized-GGI that is substrate of the terpene cyclase penB for cyclization to yield paspaline (Probable). Paspaline is subsequently converted to 13-desoxypaxilline by the cytochrome P450 monooxygenase penP, the latter being then converted to paxilline by the cytochrome P450 monooxygenase penQ (PubMed:26213965). Paxilline is converted to beta-paxitriol via C-10 ketoreduction by the short-chain dehydrogenase PC-15 which can be monoprenylated at the C-20 by the indole diterpene prenyltransferase penD (Probable). A two-step elimination (acetylation and elimination) process performed by the O-acetyltransferase PC-16 and the P.simplicissimum ptmI-ortholog not yet identified in P.crustosum, leads to the production of the prenylated form of penijanthine (Probable). The FAD-linked oxidoreductase ptmO then converts the prenylated form of penijanthine into PC-M5 which is in turn transformed into PC-M4 by the aromatic dimethylallyltransferase PC-22 (Probable). A series of oxidation steps involving 4 cytochrome P450 monooxygenases (PC-21, PC-05, PC-23, PC-20) and a FAD-dependent monooxygenase (PC-14) are required for the transformation of PC-M4 to penitrems A and E. Synthesis of these final products is proposed to proceed via penitrems D and C (PC-21, PC-05, PC-14) and penitrems B and F (PC-21, PC-05, PC-14, PC-23) (Probable).</text>
</comment>
<comment type="cofactor">
    <cofactor evidence="1">
        <name>heme</name>
        <dbReference type="ChEBI" id="CHEBI:30413"/>
    </cofactor>
</comment>
<comment type="pathway">
    <text evidence="7">Secondary metabolite biosynthesis.</text>
</comment>
<comment type="subcellular location">
    <subcellularLocation>
        <location evidence="2">Membrane</location>
        <topology evidence="2">Single-pass membrane protein</topology>
    </subcellularLocation>
</comment>
<comment type="similarity">
    <text evidence="6">Belongs to the cytochrome P450 family.</text>
</comment>
<proteinExistence type="inferred from homology"/>
<name>PENQ_PENCR</name>
<protein>
    <recommendedName>
        <fullName evidence="5">Cytochrome P450 monooxygenase penQ</fullName>
        <ecNumber evidence="7">1.-.-.-</ecNumber>
    </recommendedName>
    <alternativeName>
        <fullName evidence="5">Penitrem biosynthesis cluster protein Q</fullName>
    </alternativeName>
</protein>
<reference key="1">
    <citation type="journal article" date="2015" name="Toxins">
        <title>Molecular cloning and functional analysis of gene clusters for the biosynthesis of indole-diterpenes in Penicillium crustosum and P. janthinellum.</title>
        <authorList>
            <person name="Nicholson M.J."/>
            <person name="Eaton C.J."/>
            <person name="Starkel C."/>
            <person name="Tapper B.A."/>
            <person name="Cox M.P."/>
            <person name="Scott B."/>
        </authorList>
    </citation>
    <scope>NUCLEOTIDE SEQUENCE [GENOMIC DNA]</scope>
    <scope>IDENTIFICATION</scope>
    <scope>FUNCTION</scope>
    <scope>PATHWAY</scope>
    <source>
        <strain>PN2402</strain>
    </source>
</reference>
<feature type="chain" id="PRO_0000446574" description="Cytochrome P450 monooxygenase penQ">
    <location>
        <begin position="1"/>
        <end position="510"/>
    </location>
</feature>
<feature type="transmembrane region" description="Helical" evidence="2">
    <location>
        <begin position="9"/>
        <end position="26"/>
    </location>
</feature>
<feature type="binding site" description="axial binding residue" evidence="1">
    <location>
        <position position="448"/>
    </location>
    <ligand>
        <name>heme</name>
        <dbReference type="ChEBI" id="CHEBI:30413"/>
    </ligand>
    <ligandPart>
        <name>Fe</name>
        <dbReference type="ChEBI" id="CHEBI:18248"/>
    </ligandPart>
</feature>
<feature type="glycosylation site" description="N-linked (GlcNAc...) asparagine" evidence="3">
    <location>
        <position position="148"/>
    </location>
</feature>
<feature type="glycosylation site" description="N-linked (GlcNAc...) asparagine" evidence="3">
    <location>
        <position position="341"/>
    </location>
</feature>
<feature type="glycosylation site" description="N-linked (GlcNAc...) asparagine" evidence="3">
    <location>
        <position position="482"/>
    </location>
</feature>
<accession>A0A0E3D8P8</accession>
<sequence>MDYVTQSPWIVTLIVAATTYCTLRWVQYWRSWVNVPVVGRRGFLGSWISTILWTWEARGCIQKGYEKNKDFAFQVSTPNGWEVCICNDDMIKEYKNLMDDQMSALAVTSETFQAKYTLPGADWDAVHKLVPQPALAKSLMWLRNRAANDTDPYFADFVKTFQRAFKEEIQVEQDGAPFPCFPRYSRIVAALTVKALLGSLENRPELIDLLCEYAEAIPLDGFFIALFPAVLKPIVAFFCKAPRLSDRLVKVITEEIARRELENKHRIPEDMTDWMAQWVKDNPGYCIESAVVRVIATFFGGIHTTTQLTVHTLLEIATRPEYVDPLRQEITTALKTHGGWNKSAIESMTKLDSFIKEAQRFNPLDAASLARQATRDFQFSNGLKLPRGTWVFAPNGPMLFDESLYPAGSQFDGLRFWKLAEQTQKPHDYRLVTASSKYLQFGDGRHTCPGRFMAADEIRLIVAHTLFHFDIAIKNHGPRPRNTTFKKICFPDMAAEIMLRPRKPHGSDGN</sequence>